<feature type="chain" id="PRO_1000098627" description="Threonine--tRNA ligase">
    <location>
        <begin position="1"/>
        <end position="633"/>
    </location>
</feature>
<feature type="domain" description="TGS" evidence="2">
    <location>
        <begin position="1"/>
        <end position="59"/>
    </location>
</feature>
<feature type="region of interest" description="Catalytic" evidence="1">
    <location>
        <begin position="240"/>
        <end position="532"/>
    </location>
</feature>
<feature type="binding site" evidence="1">
    <location>
        <position position="332"/>
    </location>
    <ligand>
        <name>Zn(2+)</name>
        <dbReference type="ChEBI" id="CHEBI:29105"/>
    </ligand>
</feature>
<feature type="binding site" evidence="1">
    <location>
        <position position="383"/>
    </location>
    <ligand>
        <name>Zn(2+)</name>
        <dbReference type="ChEBI" id="CHEBI:29105"/>
    </ligand>
</feature>
<feature type="binding site" evidence="1">
    <location>
        <position position="509"/>
    </location>
    <ligand>
        <name>Zn(2+)</name>
        <dbReference type="ChEBI" id="CHEBI:29105"/>
    </ligand>
</feature>
<evidence type="ECO:0000255" key="1">
    <source>
        <dbReference type="HAMAP-Rule" id="MF_00184"/>
    </source>
</evidence>
<evidence type="ECO:0000255" key="2">
    <source>
        <dbReference type="PROSITE-ProRule" id="PRU01228"/>
    </source>
</evidence>
<organism>
    <name type="scientific">Wolbachia pipientis subsp. Culex pipiens (strain wPip)</name>
    <dbReference type="NCBI Taxonomy" id="570417"/>
    <lineage>
        <taxon>Bacteria</taxon>
        <taxon>Pseudomonadati</taxon>
        <taxon>Pseudomonadota</taxon>
        <taxon>Alphaproteobacteria</taxon>
        <taxon>Rickettsiales</taxon>
        <taxon>Anaplasmataceae</taxon>
        <taxon>Wolbachieae</taxon>
        <taxon>Wolbachia</taxon>
    </lineage>
</organism>
<name>SYT_WOLPP</name>
<reference key="1">
    <citation type="journal article" date="2008" name="Mol. Biol. Evol.">
        <title>Genome evolution of Wolbachia strain wPip from the Culex pipiens group.</title>
        <authorList>
            <person name="Klasson L."/>
            <person name="Walker T."/>
            <person name="Sebaihia M."/>
            <person name="Sanders M.J."/>
            <person name="Quail M.A."/>
            <person name="Lord A."/>
            <person name="Sanders S."/>
            <person name="Earl J."/>
            <person name="O'Neill S.L."/>
            <person name="Thomson N."/>
            <person name="Sinkins S.P."/>
            <person name="Parkhill J."/>
        </authorList>
    </citation>
    <scope>NUCLEOTIDE SEQUENCE [LARGE SCALE GENOMIC DNA]</scope>
    <source>
        <strain>wPip</strain>
    </source>
</reference>
<dbReference type="EC" id="6.1.1.3" evidence="1"/>
<dbReference type="EMBL" id="AM999887">
    <property type="protein sequence ID" value="CAQ55114.1"/>
    <property type="molecule type" value="Genomic_DNA"/>
</dbReference>
<dbReference type="RefSeq" id="WP_007302392.1">
    <property type="nucleotide sequence ID" value="NC_010981.1"/>
</dbReference>
<dbReference type="SMR" id="B3CMJ4"/>
<dbReference type="KEGG" id="wpi:WP1006"/>
<dbReference type="eggNOG" id="COG0441">
    <property type="taxonomic scope" value="Bacteria"/>
</dbReference>
<dbReference type="HOGENOM" id="CLU_008554_0_1_5"/>
<dbReference type="Proteomes" id="UP000008814">
    <property type="component" value="Chromosome"/>
</dbReference>
<dbReference type="GO" id="GO:0005737">
    <property type="term" value="C:cytoplasm"/>
    <property type="evidence" value="ECO:0007669"/>
    <property type="project" value="UniProtKB-SubCell"/>
</dbReference>
<dbReference type="GO" id="GO:0005524">
    <property type="term" value="F:ATP binding"/>
    <property type="evidence" value="ECO:0007669"/>
    <property type="project" value="UniProtKB-UniRule"/>
</dbReference>
<dbReference type="GO" id="GO:0046872">
    <property type="term" value="F:metal ion binding"/>
    <property type="evidence" value="ECO:0007669"/>
    <property type="project" value="UniProtKB-KW"/>
</dbReference>
<dbReference type="GO" id="GO:0004829">
    <property type="term" value="F:threonine-tRNA ligase activity"/>
    <property type="evidence" value="ECO:0007669"/>
    <property type="project" value="UniProtKB-UniRule"/>
</dbReference>
<dbReference type="GO" id="GO:0000049">
    <property type="term" value="F:tRNA binding"/>
    <property type="evidence" value="ECO:0007669"/>
    <property type="project" value="UniProtKB-KW"/>
</dbReference>
<dbReference type="GO" id="GO:0006435">
    <property type="term" value="P:threonyl-tRNA aminoacylation"/>
    <property type="evidence" value="ECO:0007669"/>
    <property type="project" value="UniProtKB-UniRule"/>
</dbReference>
<dbReference type="CDD" id="cd01667">
    <property type="entry name" value="TGS_ThrRS"/>
    <property type="match status" value="1"/>
</dbReference>
<dbReference type="CDD" id="cd00860">
    <property type="entry name" value="ThrRS_anticodon"/>
    <property type="match status" value="1"/>
</dbReference>
<dbReference type="CDD" id="cd00771">
    <property type="entry name" value="ThrRS_core"/>
    <property type="match status" value="1"/>
</dbReference>
<dbReference type="FunFam" id="3.30.54.20:FF:000002">
    <property type="entry name" value="Threonine--tRNA ligase"/>
    <property type="match status" value="1"/>
</dbReference>
<dbReference type="FunFam" id="3.30.930.10:FF:000002">
    <property type="entry name" value="Threonine--tRNA ligase"/>
    <property type="match status" value="1"/>
</dbReference>
<dbReference type="FunFam" id="3.40.50.800:FF:000001">
    <property type="entry name" value="Threonine--tRNA ligase"/>
    <property type="match status" value="1"/>
</dbReference>
<dbReference type="FunFam" id="3.30.980.10:FF:000005">
    <property type="entry name" value="Threonyl-tRNA synthetase, mitochondrial"/>
    <property type="match status" value="1"/>
</dbReference>
<dbReference type="Gene3D" id="3.10.20.30">
    <property type="match status" value="1"/>
</dbReference>
<dbReference type="Gene3D" id="3.30.54.20">
    <property type="match status" value="1"/>
</dbReference>
<dbReference type="Gene3D" id="3.40.50.800">
    <property type="entry name" value="Anticodon-binding domain"/>
    <property type="match status" value="1"/>
</dbReference>
<dbReference type="Gene3D" id="3.30.930.10">
    <property type="entry name" value="Bira Bifunctional Protein, Domain 2"/>
    <property type="match status" value="1"/>
</dbReference>
<dbReference type="Gene3D" id="3.30.980.10">
    <property type="entry name" value="Threonyl-trna Synthetase, Chain A, domain 2"/>
    <property type="match status" value="1"/>
</dbReference>
<dbReference type="HAMAP" id="MF_00184">
    <property type="entry name" value="Thr_tRNA_synth"/>
    <property type="match status" value="1"/>
</dbReference>
<dbReference type="InterPro" id="IPR002314">
    <property type="entry name" value="aa-tRNA-synt_IIb"/>
</dbReference>
<dbReference type="InterPro" id="IPR006195">
    <property type="entry name" value="aa-tRNA-synth_II"/>
</dbReference>
<dbReference type="InterPro" id="IPR045864">
    <property type="entry name" value="aa-tRNA-synth_II/BPL/LPL"/>
</dbReference>
<dbReference type="InterPro" id="IPR004154">
    <property type="entry name" value="Anticodon-bd"/>
</dbReference>
<dbReference type="InterPro" id="IPR036621">
    <property type="entry name" value="Anticodon-bd_dom_sf"/>
</dbReference>
<dbReference type="InterPro" id="IPR012675">
    <property type="entry name" value="Beta-grasp_dom_sf"/>
</dbReference>
<dbReference type="InterPro" id="IPR004095">
    <property type="entry name" value="TGS"/>
</dbReference>
<dbReference type="InterPro" id="IPR012676">
    <property type="entry name" value="TGS-like"/>
</dbReference>
<dbReference type="InterPro" id="IPR002320">
    <property type="entry name" value="Thr-tRNA-ligase_IIa"/>
</dbReference>
<dbReference type="InterPro" id="IPR018163">
    <property type="entry name" value="Thr/Ala-tRNA-synth_IIc_edit"/>
</dbReference>
<dbReference type="InterPro" id="IPR047246">
    <property type="entry name" value="ThrRS_anticodon"/>
</dbReference>
<dbReference type="InterPro" id="IPR033728">
    <property type="entry name" value="ThrRS_core"/>
</dbReference>
<dbReference type="InterPro" id="IPR012947">
    <property type="entry name" value="tRNA_SAD"/>
</dbReference>
<dbReference type="NCBIfam" id="TIGR00418">
    <property type="entry name" value="thrS"/>
    <property type="match status" value="1"/>
</dbReference>
<dbReference type="PANTHER" id="PTHR11451:SF44">
    <property type="entry name" value="THREONINE--TRNA LIGASE, CHLOROPLASTIC_MITOCHONDRIAL 2"/>
    <property type="match status" value="1"/>
</dbReference>
<dbReference type="PANTHER" id="PTHR11451">
    <property type="entry name" value="THREONINE-TRNA LIGASE"/>
    <property type="match status" value="1"/>
</dbReference>
<dbReference type="Pfam" id="PF03129">
    <property type="entry name" value="HGTP_anticodon"/>
    <property type="match status" value="1"/>
</dbReference>
<dbReference type="Pfam" id="PF00587">
    <property type="entry name" value="tRNA-synt_2b"/>
    <property type="match status" value="1"/>
</dbReference>
<dbReference type="Pfam" id="PF07973">
    <property type="entry name" value="tRNA_SAD"/>
    <property type="match status" value="1"/>
</dbReference>
<dbReference type="PRINTS" id="PR01047">
    <property type="entry name" value="TRNASYNTHTHR"/>
</dbReference>
<dbReference type="SMART" id="SM00863">
    <property type="entry name" value="tRNA_SAD"/>
    <property type="match status" value="1"/>
</dbReference>
<dbReference type="SUPFAM" id="SSF52954">
    <property type="entry name" value="Class II aaRS ABD-related"/>
    <property type="match status" value="1"/>
</dbReference>
<dbReference type="SUPFAM" id="SSF55681">
    <property type="entry name" value="Class II aaRS and biotin synthetases"/>
    <property type="match status" value="1"/>
</dbReference>
<dbReference type="SUPFAM" id="SSF81271">
    <property type="entry name" value="TGS-like"/>
    <property type="match status" value="1"/>
</dbReference>
<dbReference type="SUPFAM" id="SSF55186">
    <property type="entry name" value="ThrRS/AlaRS common domain"/>
    <property type="match status" value="1"/>
</dbReference>
<dbReference type="PROSITE" id="PS50862">
    <property type="entry name" value="AA_TRNA_LIGASE_II"/>
    <property type="match status" value="1"/>
</dbReference>
<dbReference type="PROSITE" id="PS51880">
    <property type="entry name" value="TGS"/>
    <property type="match status" value="1"/>
</dbReference>
<gene>
    <name evidence="1" type="primary">thrS</name>
    <name type="ordered locus">WP1006</name>
</gene>
<comment type="function">
    <text evidence="1">Catalyzes the attachment of threonine to tRNA(Thr) in a two-step reaction: L-threonine is first activated by ATP to form Thr-AMP and then transferred to the acceptor end of tRNA(Thr). Also edits incorrectly charged L-seryl-tRNA(Thr).</text>
</comment>
<comment type="catalytic activity">
    <reaction evidence="1">
        <text>tRNA(Thr) + L-threonine + ATP = L-threonyl-tRNA(Thr) + AMP + diphosphate + H(+)</text>
        <dbReference type="Rhea" id="RHEA:24624"/>
        <dbReference type="Rhea" id="RHEA-COMP:9670"/>
        <dbReference type="Rhea" id="RHEA-COMP:9704"/>
        <dbReference type="ChEBI" id="CHEBI:15378"/>
        <dbReference type="ChEBI" id="CHEBI:30616"/>
        <dbReference type="ChEBI" id="CHEBI:33019"/>
        <dbReference type="ChEBI" id="CHEBI:57926"/>
        <dbReference type="ChEBI" id="CHEBI:78442"/>
        <dbReference type="ChEBI" id="CHEBI:78534"/>
        <dbReference type="ChEBI" id="CHEBI:456215"/>
        <dbReference type="EC" id="6.1.1.3"/>
    </reaction>
</comment>
<comment type="cofactor">
    <cofactor evidence="1">
        <name>Zn(2+)</name>
        <dbReference type="ChEBI" id="CHEBI:29105"/>
    </cofactor>
    <text evidence="1">Binds 1 zinc ion per subunit.</text>
</comment>
<comment type="subunit">
    <text evidence="1">Homodimer.</text>
</comment>
<comment type="subcellular location">
    <subcellularLocation>
        <location evidence="1">Cytoplasm</location>
    </subcellularLocation>
</comment>
<comment type="similarity">
    <text evidence="1">Belongs to the class-II aminoacyl-tRNA synthetase family.</text>
</comment>
<sequence>MIKVTFLAEQKVKEYSGRVTGFDILQPDALREAIAFKVNGELYDLSREIESDTEIEVIQLSDEAGLDIIRHDAAHIMAQAVKELFPNTQITIGPTIQDGFYYDFATDRTFTTDDLAAIEKKMKEIIKSNHRFVREVWTRKQAIDFFSDIGERYKVDIVSSIPENENLTVYKQGNFVDLCRGPHSPSTGRVKAFKLMKVAGAYWRGDSKGPMLQRIYGTAWRNKDELNTYLKRLEEAEKRDHRKIAKDMDLFHIQEEAVGQIFWHEQGYTLYNVLESYIRKKLMNNGYFEVKTPILVSKELWEKSGHWDKFRENMFIIDESESKKLAIKPMNCPCHVQIFNSHIRSYRDLPIRMAEFGTCHRNESSGSLHGLMRVRGFTQDDAHIFCMEKQVNSETVKFCDLLKEVYSELGFNEISVKFSDRPDTRSGNDEVWDRAERALLEAVKEAGLSYELNPGEGAFYGPKLEFILKDAIGRNWQCGTLQVDFILPERLGAFYIGTDGHKHHPVMLHRAILGTFERFIGILIENYAGKFPVWLAPTQLAILTITNESDGYATEISNVLKEQGVRIKTDLTNEKISYKIRLHSSSKVPILWIIGKNEVTNKTVSVRNLGSEKQESFSLENATELLLKIINLN</sequence>
<keyword id="KW-0030">Aminoacyl-tRNA synthetase</keyword>
<keyword id="KW-0067">ATP-binding</keyword>
<keyword id="KW-0963">Cytoplasm</keyword>
<keyword id="KW-0436">Ligase</keyword>
<keyword id="KW-0479">Metal-binding</keyword>
<keyword id="KW-0547">Nucleotide-binding</keyword>
<keyword id="KW-0648">Protein biosynthesis</keyword>
<keyword id="KW-0694">RNA-binding</keyword>
<keyword id="KW-0820">tRNA-binding</keyword>
<keyword id="KW-0862">Zinc</keyword>
<proteinExistence type="inferred from homology"/>
<accession>B3CMJ4</accession>
<protein>
    <recommendedName>
        <fullName evidence="1">Threonine--tRNA ligase</fullName>
        <ecNumber evidence="1">6.1.1.3</ecNumber>
    </recommendedName>
    <alternativeName>
        <fullName evidence="1">Threonyl-tRNA synthetase</fullName>
        <shortName evidence="1">ThrRS</shortName>
    </alternativeName>
</protein>